<gene>
    <name type="ORF">AFUB_015000</name>
</gene>
<evidence type="ECO:0000250" key="1"/>
<evidence type="ECO:0000255" key="2">
    <source>
        <dbReference type="HAMAP-Rule" id="MF_03125"/>
    </source>
</evidence>
<keyword id="KW-0963">Cytoplasm</keyword>
<keyword id="KW-0342">GTP-binding</keyword>
<keyword id="KW-0436">Ligase</keyword>
<keyword id="KW-0460">Magnesium</keyword>
<keyword id="KW-0479">Metal-binding</keyword>
<keyword id="KW-0547">Nucleotide-binding</keyword>
<keyword id="KW-0658">Purine biosynthesis</keyword>
<feature type="chain" id="PRO_0000399322" description="Adenylosuccinate synthetase">
    <location>
        <begin position="1"/>
        <end position="424"/>
    </location>
</feature>
<feature type="active site" description="Proton acceptor" evidence="2">
    <location>
        <position position="13"/>
    </location>
</feature>
<feature type="active site" description="Proton donor" evidence="2">
    <location>
        <position position="41"/>
    </location>
</feature>
<feature type="binding site" evidence="2">
    <location>
        <begin position="12"/>
        <end position="18"/>
    </location>
    <ligand>
        <name>GTP</name>
        <dbReference type="ChEBI" id="CHEBI:37565"/>
    </ligand>
</feature>
<feature type="binding site" description="in other chain" evidence="2">
    <location>
        <begin position="13"/>
        <end position="16"/>
    </location>
    <ligand>
        <name>IMP</name>
        <dbReference type="ChEBI" id="CHEBI:58053"/>
        <note>ligand shared between dimeric partners</note>
    </ligand>
</feature>
<feature type="binding site" evidence="2">
    <location>
        <position position="13"/>
    </location>
    <ligand>
        <name>Mg(2+)</name>
        <dbReference type="ChEBI" id="CHEBI:18420"/>
    </ligand>
</feature>
<feature type="binding site" description="in other chain" evidence="2">
    <location>
        <begin position="38"/>
        <end position="41"/>
    </location>
    <ligand>
        <name>IMP</name>
        <dbReference type="ChEBI" id="CHEBI:58053"/>
        <note>ligand shared between dimeric partners</note>
    </ligand>
</feature>
<feature type="binding site" evidence="2">
    <location>
        <begin position="40"/>
        <end position="42"/>
    </location>
    <ligand>
        <name>GTP</name>
        <dbReference type="ChEBI" id="CHEBI:37565"/>
    </ligand>
</feature>
<feature type="binding site" evidence="2">
    <location>
        <position position="40"/>
    </location>
    <ligand>
        <name>Mg(2+)</name>
        <dbReference type="ChEBI" id="CHEBI:18420"/>
    </ligand>
</feature>
<feature type="binding site" description="in other chain" evidence="2">
    <location>
        <position position="130"/>
    </location>
    <ligand>
        <name>IMP</name>
        <dbReference type="ChEBI" id="CHEBI:58053"/>
        <note>ligand shared between dimeric partners</note>
    </ligand>
</feature>
<feature type="binding site" evidence="2">
    <location>
        <position position="144"/>
    </location>
    <ligand>
        <name>IMP</name>
        <dbReference type="ChEBI" id="CHEBI:58053"/>
        <note>ligand shared between dimeric partners</note>
    </ligand>
</feature>
<feature type="binding site" description="in other chain" evidence="2">
    <location>
        <position position="220"/>
    </location>
    <ligand>
        <name>IMP</name>
        <dbReference type="ChEBI" id="CHEBI:58053"/>
        <note>ligand shared between dimeric partners</note>
    </ligand>
</feature>
<feature type="binding site" description="in other chain" evidence="2">
    <location>
        <position position="235"/>
    </location>
    <ligand>
        <name>IMP</name>
        <dbReference type="ChEBI" id="CHEBI:58053"/>
        <note>ligand shared between dimeric partners</note>
    </ligand>
</feature>
<feature type="binding site" evidence="2">
    <location>
        <begin position="295"/>
        <end position="301"/>
    </location>
    <ligand>
        <name>substrate</name>
    </ligand>
</feature>
<feature type="binding site" description="in other chain" evidence="2">
    <location>
        <position position="299"/>
    </location>
    <ligand>
        <name>IMP</name>
        <dbReference type="ChEBI" id="CHEBI:58053"/>
        <note>ligand shared between dimeric partners</note>
    </ligand>
</feature>
<feature type="binding site" evidence="2">
    <location>
        <position position="301"/>
    </location>
    <ligand>
        <name>GTP</name>
        <dbReference type="ChEBI" id="CHEBI:37565"/>
    </ligand>
</feature>
<feature type="binding site" evidence="2">
    <location>
        <begin position="327"/>
        <end position="329"/>
    </location>
    <ligand>
        <name>GTP</name>
        <dbReference type="ChEBI" id="CHEBI:37565"/>
    </ligand>
</feature>
<feature type="binding site" evidence="2">
    <location>
        <begin position="412"/>
        <end position="414"/>
    </location>
    <ligand>
        <name>GTP</name>
        <dbReference type="ChEBI" id="CHEBI:37565"/>
    </ligand>
</feature>
<proteinExistence type="inferred from homology"/>
<accession>B0XNF8</accession>
<protein>
    <recommendedName>
        <fullName evidence="2">Adenylosuccinate synthetase</fullName>
        <shortName evidence="2">AMPSase</shortName>
        <shortName evidence="2">AdSS</shortName>
        <ecNumber evidence="2">6.3.4.4</ecNumber>
    </recommendedName>
    <alternativeName>
        <fullName evidence="2">IMP--aspartate ligase</fullName>
    </alternativeName>
</protein>
<organism>
    <name type="scientific">Aspergillus fumigatus (strain CBS 144.89 / FGSC A1163 / CEA10)</name>
    <name type="common">Neosartorya fumigata</name>
    <dbReference type="NCBI Taxonomy" id="451804"/>
    <lineage>
        <taxon>Eukaryota</taxon>
        <taxon>Fungi</taxon>
        <taxon>Dikarya</taxon>
        <taxon>Ascomycota</taxon>
        <taxon>Pezizomycotina</taxon>
        <taxon>Eurotiomycetes</taxon>
        <taxon>Eurotiomycetidae</taxon>
        <taxon>Eurotiales</taxon>
        <taxon>Aspergillaceae</taxon>
        <taxon>Aspergillus</taxon>
        <taxon>Aspergillus subgen. Fumigati</taxon>
    </lineage>
</organism>
<name>PURA_ASPFC</name>
<comment type="function">
    <text evidence="1">Plays an important role in the de novo pathway and in the salvage pathway of purine nucleotide biosynthesis. Catalyzes the first committed step in the biosynthesis of AMP from IMP (By similarity).</text>
</comment>
<comment type="catalytic activity">
    <reaction evidence="2">
        <text>IMP + L-aspartate + GTP = N(6)-(1,2-dicarboxyethyl)-AMP + GDP + phosphate + 2 H(+)</text>
        <dbReference type="Rhea" id="RHEA:15753"/>
        <dbReference type="ChEBI" id="CHEBI:15378"/>
        <dbReference type="ChEBI" id="CHEBI:29991"/>
        <dbReference type="ChEBI" id="CHEBI:37565"/>
        <dbReference type="ChEBI" id="CHEBI:43474"/>
        <dbReference type="ChEBI" id="CHEBI:57567"/>
        <dbReference type="ChEBI" id="CHEBI:58053"/>
        <dbReference type="ChEBI" id="CHEBI:58189"/>
        <dbReference type="EC" id="6.3.4.4"/>
    </reaction>
</comment>
<comment type="cofactor">
    <cofactor evidence="2">
        <name>Mg(2+)</name>
        <dbReference type="ChEBI" id="CHEBI:18420"/>
    </cofactor>
    <text evidence="2">Binds 1 Mg(2+) ion per subunit.</text>
</comment>
<comment type="pathway">
    <text evidence="2">Purine metabolism; AMP biosynthesis via de novo pathway; AMP from IMP: step 1/2.</text>
</comment>
<comment type="subunit">
    <text evidence="2">Homodimer.</text>
</comment>
<comment type="subcellular location">
    <subcellularLocation>
        <location evidence="2">Cytoplasm</location>
    </subcellularLocation>
</comment>
<comment type="similarity">
    <text evidence="2">Belongs to the adenylosuccinate synthetase family.</text>
</comment>
<reference key="1">
    <citation type="journal article" date="2008" name="PLoS Genet.">
        <title>Genomic islands in the pathogenic filamentous fungus Aspergillus fumigatus.</title>
        <authorList>
            <person name="Fedorova N.D."/>
            <person name="Khaldi N."/>
            <person name="Joardar V.S."/>
            <person name="Maiti R."/>
            <person name="Amedeo P."/>
            <person name="Anderson M.J."/>
            <person name="Crabtree J."/>
            <person name="Silva J.C."/>
            <person name="Badger J.H."/>
            <person name="Albarraq A."/>
            <person name="Angiuoli S."/>
            <person name="Bussey H."/>
            <person name="Bowyer P."/>
            <person name="Cotty P.J."/>
            <person name="Dyer P.S."/>
            <person name="Egan A."/>
            <person name="Galens K."/>
            <person name="Fraser-Liggett C.M."/>
            <person name="Haas B.J."/>
            <person name="Inman J.M."/>
            <person name="Kent R."/>
            <person name="Lemieux S."/>
            <person name="Malavazi I."/>
            <person name="Orvis J."/>
            <person name="Roemer T."/>
            <person name="Ronning C.M."/>
            <person name="Sundaram J.P."/>
            <person name="Sutton G."/>
            <person name="Turner G."/>
            <person name="Venter J.C."/>
            <person name="White O.R."/>
            <person name="Whitty B.R."/>
            <person name="Youngman P."/>
            <person name="Wolfe K.H."/>
            <person name="Goldman G.H."/>
            <person name="Wortman J.R."/>
            <person name="Jiang B."/>
            <person name="Denning D.W."/>
            <person name="Nierman W.C."/>
        </authorList>
    </citation>
    <scope>NUCLEOTIDE SEQUENCE [LARGE SCALE GENOMIC DNA]</scope>
    <source>
        <strain>CBS 144.89 / FGSC A1163 / CEA10</strain>
    </source>
</reference>
<sequence>MGITIVLGSQWGDEGKGKITDMLSQQATLCCRAAGGHNAGHTIVHENITYDFHILPSGLVSPSCVNLIGAGTVVHVPSFFKELASLEEKGLKDAGKRIFISDRAHVCFDLHSIVDGLEEAKLGGRKVGTTGKGIGPCYSDKAARRGVRIGEVLDEAVFERKLRSLHAGYTARFGELQYDVEEEIGRFKDYRKRLVPYIVDQLAFFKQYKDSPNTLVEGANALMLDLDHGTYPYVTSSSTGLGGAVQALSLNPTSITSVIGVVKAYTTRVGSGPFPSEQLNEYGDKLQSVGREFGVTTGRRRRCGWFDLVLCRYSQAINHYTALNLTKLDILDDFDEIKVAVAYVLPDGTRLTDTYPADPEVLEKVKVEYVTLPGWKSNTMGVKKYEDLPANARAYIEYIERELGGVPIKWIGTGPARDHMICRE</sequence>
<dbReference type="EC" id="6.3.4.4" evidence="2"/>
<dbReference type="EMBL" id="DS499594">
    <property type="protein sequence ID" value="EDP56780.1"/>
    <property type="molecule type" value="Genomic_DNA"/>
</dbReference>
<dbReference type="SMR" id="B0XNF8"/>
<dbReference type="EnsemblFungi" id="EDP56780">
    <property type="protein sequence ID" value="EDP56780"/>
    <property type="gene ID" value="AFUB_015000"/>
</dbReference>
<dbReference type="VEuPathDB" id="FungiDB:AFUB_015000"/>
<dbReference type="HOGENOM" id="CLU_029848_3_2_1"/>
<dbReference type="OrthoDB" id="4122at5052"/>
<dbReference type="PhylomeDB" id="B0XNF8"/>
<dbReference type="UniPathway" id="UPA00075">
    <property type="reaction ID" value="UER00335"/>
</dbReference>
<dbReference type="Proteomes" id="UP000001699">
    <property type="component" value="Unassembled WGS sequence"/>
</dbReference>
<dbReference type="GO" id="GO:0005737">
    <property type="term" value="C:cytoplasm"/>
    <property type="evidence" value="ECO:0007669"/>
    <property type="project" value="UniProtKB-SubCell"/>
</dbReference>
<dbReference type="GO" id="GO:0004019">
    <property type="term" value="F:adenylosuccinate synthase activity"/>
    <property type="evidence" value="ECO:0007669"/>
    <property type="project" value="UniProtKB-UniRule"/>
</dbReference>
<dbReference type="GO" id="GO:0016208">
    <property type="term" value="F:AMP binding"/>
    <property type="evidence" value="ECO:0007669"/>
    <property type="project" value="EnsemblFungi"/>
</dbReference>
<dbReference type="GO" id="GO:0019002">
    <property type="term" value="F:GMP binding"/>
    <property type="evidence" value="ECO:0007669"/>
    <property type="project" value="EnsemblFungi"/>
</dbReference>
<dbReference type="GO" id="GO:0005525">
    <property type="term" value="F:GTP binding"/>
    <property type="evidence" value="ECO:0007669"/>
    <property type="project" value="UniProtKB-UniRule"/>
</dbReference>
<dbReference type="GO" id="GO:0000287">
    <property type="term" value="F:magnesium ion binding"/>
    <property type="evidence" value="ECO:0007669"/>
    <property type="project" value="UniProtKB-UniRule"/>
</dbReference>
<dbReference type="GO" id="GO:0044208">
    <property type="term" value="P:'de novo' AMP biosynthetic process"/>
    <property type="evidence" value="ECO:0007669"/>
    <property type="project" value="UniProtKB-UniRule"/>
</dbReference>
<dbReference type="GO" id="GO:0071276">
    <property type="term" value="P:cellular response to cadmium ion"/>
    <property type="evidence" value="ECO:0007669"/>
    <property type="project" value="EnsemblFungi"/>
</dbReference>
<dbReference type="GO" id="GO:0046040">
    <property type="term" value="P:IMP metabolic process"/>
    <property type="evidence" value="ECO:0007669"/>
    <property type="project" value="TreeGrafter"/>
</dbReference>
<dbReference type="CDD" id="cd03108">
    <property type="entry name" value="AdSS"/>
    <property type="match status" value="1"/>
</dbReference>
<dbReference type="FunFam" id="1.10.300.10:FF:000001">
    <property type="entry name" value="Adenylosuccinate synthetase"/>
    <property type="match status" value="1"/>
</dbReference>
<dbReference type="FunFam" id="3.90.170.10:FF:000001">
    <property type="entry name" value="Adenylosuccinate synthetase"/>
    <property type="match status" value="1"/>
</dbReference>
<dbReference type="Gene3D" id="3.40.440.10">
    <property type="entry name" value="Adenylosuccinate Synthetase, subunit A, domain 1"/>
    <property type="match status" value="1"/>
</dbReference>
<dbReference type="Gene3D" id="1.10.300.10">
    <property type="entry name" value="Adenylosuccinate Synthetase, subunit A, domain 2"/>
    <property type="match status" value="1"/>
</dbReference>
<dbReference type="Gene3D" id="3.90.170.10">
    <property type="entry name" value="Adenylosuccinate Synthetase, subunit A, domain 3"/>
    <property type="match status" value="1"/>
</dbReference>
<dbReference type="HAMAP" id="MF_00011">
    <property type="entry name" value="Adenylosucc_synth"/>
    <property type="match status" value="1"/>
</dbReference>
<dbReference type="InterPro" id="IPR018220">
    <property type="entry name" value="Adenylosuccin_syn_GTP-bd"/>
</dbReference>
<dbReference type="InterPro" id="IPR033128">
    <property type="entry name" value="Adenylosuccin_syn_Lys_AS"/>
</dbReference>
<dbReference type="InterPro" id="IPR042109">
    <property type="entry name" value="Adenylosuccinate_synth_dom1"/>
</dbReference>
<dbReference type="InterPro" id="IPR042110">
    <property type="entry name" value="Adenylosuccinate_synth_dom2"/>
</dbReference>
<dbReference type="InterPro" id="IPR042111">
    <property type="entry name" value="Adenylosuccinate_synth_dom3"/>
</dbReference>
<dbReference type="InterPro" id="IPR001114">
    <property type="entry name" value="Adenylosuccinate_synthetase"/>
</dbReference>
<dbReference type="InterPro" id="IPR027417">
    <property type="entry name" value="P-loop_NTPase"/>
</dbReference>
<dbReference type="NCBIfam" id="NF002223">
    <property type="entry name" value="PRK01117.1"/>
    <property type="match status" value="1"/>
</dbReference>
<dbReference type="NCBIfam" id="TIGR00184">
    <property type="entry name" value="purA"/>
    <property type="match status" value="1"/>
</dbReference>
<dbReference type="PANTHER" id="PTHR11846">
    <property type="entry name" value="ADENYLOSUCCINATE SYNTHETASE"/>
    <property type="match status" value="1"/>
</dbReference>
<dbReference type="PANTHER" id="PTHR11846:SF0">
    <property type="entry name" value="ADENYLOSUCCINATE SYNTHETASE"/>
    <property type="match status" value="1"/>
</dbReference>
<dbReference type="Pfam" id="PF00709">
    <property type="entry name" value="Adenylsucc_synt"/>
    <property type="match status" value="1"/>
</dbReference>
<dbReference type="SMART" id="SM00788">
    <property type="entry name" value="Adenylsucc_synt"/>
    <property type="match status" value="1"/>
</dbReference>
<dbReference type="SUPFAM" id="SSF52540">
    <property type="entry name" value="P-loop containing nucleoside triphosphate hydrolases"/>
    <property type="match status" value="1"/>
</dbReference>
<dbReference type="PROSITE" id="PS01266">
    <property type="entry name" value="ADENYLOSUCCIN_SYN_1"/>
    <property type="match status" value="1"/>
</dbReference>
<dbReference type="PROSITE" id="PS00513">
    <property type="entry name" value="ADENYLOSUCCIN_SYN_2"/>
    <property type="match status" value="1"/>
</dbReference>